<sequence>MNKLQNIRGVAFDLDGTLVDSAPGLAAAVDMALYALELPVAGEERVITWIGNGADVLMERALTWASQERATLRKTMGKPPVDEDIPAEEQVRILRKLFDKYYGEVAEEGTFLFPHVADTLGALHASGLSLGLVTNKPTPFVAPLLESLDIAKYFSVVIGGDDVQNKKPHPEPLLLVASRLGMTPEQMLFVGDSRNDIQAAKAAGCPSVGLTYGYNYGEVIALSEPDVIYDSFNDLLPALGLPHSDNQEIKND</sequence>
<evidence type="ECO:0000255" key="1">
    <source>
        <dbReference type="HAMAP-Rule" id="MF_00495"/>
    </source>
</evidence>
<evidence type="ECO:0000305" key="2"/>
<accession>Q8Z202</accession>
<gene>
    <name evidence="1" type="primary">gph</name>
    <name type="ordered locus">STY4314</name>
    <name type="ordered locus">t4025</name>
</gene>
<organism>
    <name type="scientific">Salmonella typhi</name>
    <dbReference type="NCBI Taxonomy" id="90370"/>
    <lineage>
        <taxon>Bacteria</taxon>
        <taxon>Pseudomonadati</taxon>
        <taxon>Pseudomonadota</taxon>
        <taxon>Gammaproteobacteria</taxon>
        <taxon>Enterobacterales</taxon>
        <taxon>Enterobacteriaceae</taxon>
        <taxon>Salmonella</taxon>
    </lineage>
</organism>
<keyword id="KW-0119">Carbohydrate metabolism</keyword>
<keyword id="KW-0868">Chloride</keyword>
<keyword id="KW-0378">Hydrolase</keyword>
<keyword id="KW-0460">Magnesium</keyword>
<keyword id="KW-0479">Metal-binding</keyword>
<dbReference type="EC" id="3.1.3.18" evidence="1"/>
<dbReference type="EMBL" id="AL513382">
    <property type="protein sequence ID" value="CAD08132.1"/>
    <property type="molecule type" value="Genomic_DNA"/>
</dbReference>
<dbReference type="EMBL" id="AE014613">
    <property type="protein sequence ID" value="AAO71494.1"/>
    <property type="molecule type" value="Genomic_DNA"/>
</dbReference>
<dbReference type="RefSeq" id="NP_458422.1">
    <property type="nucleotide sequence ID" value="NC_003198.1"/>
</dbReference>
<dbReference type="RefSeq" id="WP_001038040.1">
    <property type="nucleotide sequence ID" value="NZ_QXGZ01000001.1"/>
</dbReference>
<dbReference type="SMR" id="Q8Z202"/>
<dbReference type="STRING" id="220341.gene:17588145"/>
<dbReference type="KEGG" id="stt:t4025"/>
<dbReference type="KEGG" id="sty:STY4314"/>
<dbReference type="PATRIC" id="fig|220341.7.peg.4409"/>
<dbReference type="eggNOG" id="COG0546">
    <property type="taxonomic scope" value="Bacteria"/>
</dbReference>
<dbReference type="HOGENOM" id="CLU_045011_19_1_6"/>
<dbReference type="OMA" id="YLCGKFG"/>
<dbReference type="UniPathway" id="UPA00865">
    <property type="reaction ID" value="UER00834"/>
</dbReference>
<dbReference type="Proteomes" id="UP000000541">
    <property type="component" value="Chromosome"/>
</dbReference>
<dbReference type="Proteomes" id="UP000002670">
    <property type="component" value="Chromosome"/>
</dbReference>
<dbReference type="GO" id="GO:0005829">
    <property type="term" value="C:cytosol"/>
    <property type="evidence" value="ECO:0007669"/>
    <property type="project" value="TreeGrafter"/>
</dbReference>
<dbReference type="GO" id="GO:0046872">
    <property type="term" value="F:metal ion binding"/>
    <property type="evidence" value="ECO:0007669"/>
    <property type="project" value="UniProtKB-KW"/>
</dbReference>
<dbReference type="GO" id="GO:0008967">
    <property type="term" value="F:phosphoglycolate phosphatase activity"/>
    <property type="evidence" value="ECO:0007669"/>
    <property type="project" value="UniProtKB-UniRule"/>
</dbReference>
<dbReference type="GO" id="GO:0005975">
    <property type="term" value="P:carbohydrate metabolic process"/>
    <property type="evidence" value="ECO:0007669"/>
    <property type="project" value="InterPro"/>
</dbReference>
<dbReference type="GO" id="GO:0006281">
    <property type="term" value="P:DNA repair"/>
    <property type="evidence" value="ECO:0007669"/>
    <property type="project" value="TreeGrafter"/>
</dbReference>
<dbReference type="GO" id="GO:0046295">
    <property type="term" value="P:glycolate biosynthetic process"/>
    <property type="evidence" value="ECO:0007669"/>
    <property type="project" value="UniProtKB-UniRule"/>
</dbReference>
<dbReference type="CDD" id="cd16417">
    <property type="entry name" value="HAD_PGPase"/>
    <property type="match status" value="1"/>
</dbReference>
<dbReference type="FunFam" id="1.10.150.240:FF:000003">
    <property type="entry name" value="Phosphoglycolate phosphatase"/>
    <property type="match status" value="1"/>
</dbReference>
<dbReference type="FunFam" id="3.40.50.1000:FF:000022">
    <property type="entry name" value="Phosphoglycolate phosphatase"/>
    <property type="match status" value="1"/>
</dbReference>
<dbReference type="Gene3D" id="3.40.50.1000">
    <property type="entry name" value="HAD superfamily/HAD-like"/>
    <property type="match status" value="1"/>
</dbReference>
<dbReference type="Gene3D" id="1.10.150.240">
    <property type="entry name" value="Putative phosphatase, domain 2"/>
    <property type="match status" value="1"/>
</dbReference>
<dbReference type="HAMAP" id="MF_00495">
    <property type="entry name" value="GPH_hydrolase_bact"/>
    <property type="match status" value="1"/>
</dbReference>
<dbReference type="InterPro" id="IPR050155">
    <property type="entry name" value="HAD-like_hydrolase_sf"/>
</dbReference>
<dbReference type="InterPro" id="IPR036412">
    <property type="entry name" value="HAD-like_sf"/>
</dbReference>
<dbReference type="InterPro" id="IPR006439">
    <property type="entry name" value="HAD-SF_hydro_IA"/>
</dbReference>
<dbReference type="InterPro" id="IPR041492">
    <property type="entry name" value="HAD_2"/>
</dbReference>
<dbReference type="InterPro" id="IPR023214">
    <property type="entry name" value="HAD_sf"/>
</dbReference>
<dbReference type="InterPro" id="IPR023198">
    <property type="entry name" value="PGP-like_dom2"/>
</dbReference>
<dbReference type="InterPro" id="IPR037512">
    <property type="entry name" value="PGPase_prok"/>
</dbReference>
<dbReference type="NCBIfam" id="TIGR01549">
    <property type="entry name" value="HAD-SF-IA-v1"/>
    <property type="match status" value="1"/>
</dbReference>
<dbReference type="NCBIfam" id="TIGR01509">
    <property type="entry name" value="HAD-SF-IA-v3"/>
    <property type="match status" value="1"/>
</dbReference>
<dbReference type="NCBIfam" id="TIGR01449">
    <property type="entry name" value="PGP_bact"/>
    <property type="match status" value="1"/>
</dbReference>
<dbReference type="NCBIfam" id="NF009694">
    <property type="entry name" value="PRK13222.1-1"/>
    <property type="match status" value="1"/>
</dbReference>
<dbReference type="NCBIfam" id="NF009695">
    <property type="entry name" value="PRK13222.1-2"/>
    <property type="match status" value="1"/>
</dbReference>
<dbReference type="NCBIfam" id="NF009697">
    <property type="entry name" value="PRK13222.1-4"/>
    <property type="match status" value="1"/>
</dbReference>
<dbReference type="PANTHER" id="PTHR43434">
    <property type="entry name" value="PHOSPHOGLYCOLATE PHOSPHATASE"/>
    <property type="match status" value="1"/>
</dbReference>
<dbReference type="PANTHER" id="PTHR43434:SF1">
    <property type="entry name" value="PHOSPHOGLYCOLATE PHOSPHATASE"/>
    <property type="match status" value="1"/>
</dbReference>
<dbReference type="Pfam" id="PF13419">
    <property type="entry name" value="HAD_2"/>
    <property type="match status" value="1"/>
</dbReference>
<dbReference type="PRINTS" id="PR00413">
    <property type="entry name" value="HADHALOGNASE"/>
</dbReference>
<dbReference type="SFLD" id="SFLDG01135">
    <property type="entry name" value="C1.5.6:_HAD__Beta-PGM__Phospha"/>
    <property type="match status" value="1"/>
</dbReference>
<dbReference type="SFLD" id="SFLDS00003">
    <property type="entry name" value="Haloacid_Dehalogenase"/>
    <property type="match status" value="1"/>
</dbReference>
<dbReference type="SUPFAM" id="SSF56784">
    <property type="entry name" value="HAD-like"/>
    <property type="match status" value="1"/>
</dbReference>
<protein>
    <recommendedName>
        <fullName evidence="1">Phosphoglycolate phosphatase</fullName>
        <shortName evidence="1">PGP</shortName>
        <shortName evidence="1">PGPase</shortName>
        <ecNumber evidence="1">3.1.3.18</ecNumber>
    </recommendedName>
</protein>
<feature type="chain" id="PRO_0000108040" description="Phosphoglycolate phosphatase">
    <location>
        <begin position="1"/>
        <end position="252"/>
    </location>
</feature>
<feature type="active site" description="Nucleophile" evidence="1">
    <location>
        <position position="13"/>
    </location>
</feature>
<feature type="binding site" evidence="1">
    <location>
        <position position="13"/>
    </location>
    <ligand>
        <name>Mg(2+)</name>
        <dbReference type="ChEBI" id="CHEBI:18420"/>
    </ligand>
</feature>
<feature type="binding site" evidence="1">
    <location>
        <position position="15"/>
    </location>
    <ligand>
        <name>Mg(2+)</name>
        <dbReference type="ChEBI" id="CHEBI:18420"/>
    </ligand>
</feature>
<feature type="binding site" evidence="1">
    <location>
        <position position="192"/>
    </location>
    <ligand>
        <name>Mg(2+)</name>
        <dbReference type="ChEBI" id="CHEBI:18420"/>
    </ligand>
</feature>
<feature type="sequence conflict" description="In Ref. 2; AAO71494." evidence="2" ref="2">
    <original>K</original>
    <variation>R</variation>
    <location>
        <position position="100"/>
    </location>
</feature>
<name>GPH_SALTI</name>
<proteinExistence type="inferred from homology"/>
<comment type="function">
    <text evidence="1">Specifically catalyzes the dephosphorylation of 2-phosphoglycolate. Is involved in the dissimilation of the intracellular 2-phosphoglycolate formed during the DNA repair of 3'-phosphoglycolate ends, a major class of DNA lesions induced by oxidative stress.</text>
</comment>
<comment type="catalytic activity">
    <reaction evidence="1">
        <text>2-phosphoglycolate + H2O = glycolate + phosphate</text>
        <dbReference type="Rhea" id="RHEA:14369"/>
        <dbReference type="ChEBI" id="CHEBI:15377"/>
        <dbReference type="ChEBI" id="CHEBI:29805"/>
        <dbReference type="ChEBI" id="CHEBI:43474"/>
        <dbReference type="ChEBI" id="CHEBI:58033"/>
        <dbReference type="EC" id="3.1.3.18"/>
    </reaction>
</comment>
<comment type="cofactor">
    <cofactor evidence="1">
        <name>Mg(2+)</name>
        <dbReference type="ChEBI" id="CHEBI:18420"/>
    </cofactor>
</comment>
<comment type="cofactor">
    <cofactor evidence="1">
        <name>chloride</name>
        <dbReference type="ChEBI" id="CHEBI:17996"/>
    </cofactor>
</comment>
<comment type="pathway">
    <text evidence="1">Organic acid metabolism; glycolate biosynthesis; glycolate from 2-phosphoglycolate: step 1/1.</text>
</comment>
<comment type="subunit">
    <text evidence="1">Monomer.</text>
</comment>
<comment type="similarity">
    <text evidence="1">Belongs to the HAD-like hydrolase superfamily. CbbY/CbbZ/Gph/YieH family.</text>
</comment>
<reference key="1">
    <citation type="journal article" date="2001" name="Nature">
        <title>Complete genome sequence of a multiple drug resistant Salmonella enterica serovar Typhi CT18.</title>
        <authorList>
            <person name="Parkhill J."/>
            <person name="Dougan G."/>
            <person name="James K.D."/>
            <person name="Thomson N.R."/>
            <person name="Pickard D."/>
            <person name="Wain J."/>
            <person name="Churcher C.M."/>
            <person name="Mungall K.L."/>
            <person name="Bentley S.D."/>
            <person name="Holden M.T.G."/>
            <person name="Sebaihia M."/>
            <person name="Baker S."/>
            <person name="Basham D."/>
            <person name="Brooks K."/>
            <person name="Chillingworth T."/>
            <person name="Connerton P."/>
            <person name="Cronin A."/>
            <person name="Davis P."/>
            <person name="Davies R.M."/>
            <person name="Dowd L."/>
            <person name="White N."/>
            <person name="Farrar J."/>
            <person name="Feltwell T."/>
            <person name="Hamlin N."/>
            <person name="Haque A."/>
            <person name="Hien T.T."/>
            <person name="Holroyd S."/>
            <person name="Jagels K."/>
            <person name="Krogh A."/>
            <person name="Larsen T.S."/>
            <person name="Leather S."/>
            <person name="Moule S."/>
            <person name="O'Gaora P."/>
            <person name="Parry C."/>
            <person name="Quail M.A."/>
            <person name="Rutherford K.M."/>
            <person name="Simmonds M."/>
            <person name="Skelton J."/>
            <person name="Stevens K."/>
            <person name="Whitehead S."/>
            <person name="Barrell B.G."/>
        </authorList>
    </citation>
    <scope>NUCLEOTIDE SEQUENCE [LARGE SCALE GENOMIC DNA]</scope>
    <source>
        <strain>CT18</strain>
    </source>
</reference>
<reference key="2">
    <citation type="journal article" date="2003" name="J. Bacteriol.">
        <title>Comparative genomics of Salmonella enterica serovar Typhi strains Ty2 and CT18.</title>
        <authorList>
            <person name="Deng W."/>
            <person name="Liou S.-R."/>
            <person name="Plunkett G. III"/>
            <person name="Mayhew G.F."/>
            <person name="Rose D.J."/>
            <person name="Burland V."/>
            <person name="Kodoyianni V."/>
            <person name="Schwartz D.C."/>
            <person name="Blattner F.R."/>
        </authorList>
    </citation>
    <scope>NUCLEOTIDE SEQUENCE [LARGE SCALE GENOMIC DNA]</scope>
    <source>
        <strain>ATCC 700931 / Ty2</strain>
    </source>
</reference>